<sequence length="260" mass="29055">MHRYALKVEYNGAPFVGWQRQKEHPTIQGAIERALGKIAPGPHTIAAAGRTDAGVHAIAQVAHCDLERDWDPFRLSEALNYHLKPAPIAITACTAVDAEWHARFSARQRQYLFRILCRRAPATHQKGLVWQVKQKLDVTAMREAAALLIGQHDFTTFRSTICQAESPVKTLDRLDVNEVDTPYGREIHFDVRARSFLHNQVRSFVGTLERVGAGSSTPQDVARALALRDRAACGPVCPPHGLYLAHVVYDRPPFEAERSI</sequence>
<protein>
    <recommendedName>
        <fullName evidence="1">tRNA pseudouridine synthase A</fullName>
        <ecNumber evidence="1">5.4.99.12</ecNumber>
    </recommendedName>
    <alternativeName>
        <fullName evidence="1">tRNA pseudouridine(38-40) synthase</fullName>
    </alternativeName>
    <alternativeName>
        <fullName evidence="1">tRNA pseudouridylate synthase I</fullName>
    </alternativeName>
    <alternativeName>
        <fullName evidence="1">tRNA-uridine isomerase I</fullName>
    </alternativeName>
</protein>
<evidence type="ECO:0000255" key="1">
    <source>
        <dbReference type="HAMAP-Rule" id="MF_00171"/>
    </source>
</evidence>
<gene>
    <name evidence="1" type="primary">truA</name>
    <name type="ordered locus">RD1_2070</name>
</gene>
<comment type="function">
    <text evidence="1">Formation of pseudouridine at positions 38, 39 and 40 in the anticodon stem and loop of transfer RNAs.</text>
</comment>
<comment type="catalytic activity">
    <reaction evidence="1">
        <text>uridine(38/39/40) in tRNA = pseudouridine(38/39/40) in tRNA</text>
        <dbReference type="Rhea" id="RHEA:22376"/>
        <dbReference type="Rhea" id="RHEA-COMP:10085"/>
        <dbReference type="Rhea" id="RHEA-COMP:10087"/>
        <dbReference type="ChEBI" id="CHEBI:65314"/>
        <dbReference type="ChEBI" id="CHEBI:65315"/>
        <dbReference type="EC" id="5.4.99.12"/>
    </reaction>
</comment>
<comment type="subunit">
    <text evidence="1">Homodimer.</text>
</comment>
<comment type="similarity">
    <text evidence="1">Belongs to the tRNA pseudouridine synthase TruA family.</text>
</comment>
<feature type="chain" id="PRO_1000017160" description="tRNA pseudouridine synthase A">
    <location>
        <begin position="1"/>
        <end position="260"/>
    </location>
</feature>
<feature type="active site" description="Nucleophile" evidence="1">
    <location>
        <position position="52"/>
    </location>
</feature>
<feature type="binding site" evidence="1">
    <location>
        <position position="111"/>
    </location>
    <ligand>
        <name>substrate</name>
    </ligand>
</feature>
<proteinExistence type="inferred from homology"/>
<keyword id="KW-0413">Isomerase</keyword>
<keyword id="KW-1185">Reference proteome</keyword>
<keyword id="KW-0819">tRNA processing</keyword>
<accession>Q168C1</accession>
<reference key="1">
    <citation type="journal article" date="2007" name="J. Bacteriol.">
        <title>The complete genome sequence of Roseobacter denitrificans reveals a mixotrophic rather than photosynthetic metabolism.</title>
        <authorList>
            <person name="Swingley W.D."/>
            <person name="Sadekar S."/>
            <person name="Mastrian S.D."/>
            <person name="Matthies H.J."/>
            <person name="Hao J."/>
            <person name="Ramos H."/>
            <person name="Acharya C.R."/>
            <person name="Conrad A.L."/>
            <person name="Taylor H.L."/>
            <person name="Dejesa L.C."/>
            <person name="Shah M.K."/>
            <person name="O'Huallachain M.E."/>
            <person name="Lince M.T."/>
            <person name="Blankenship R.E."/>
            <person name="Beatty J.T."/>
            <person name="Touchman J.W."/>
        </authorList>
    </citation>
    <scope>NUCLEOTIDE SEQUENCE [LARGE SCALE GENOMIC DNA]</scope>
    <source>
        <strain>ATCC 33942 / OCh 114</strain>
    </source>
</reference>
<name>TRUA_ROSDO</name>
<dbReference type="EC" id="5.4.99.12" evidence="1"/>
<dbReference type="EMBL" id="CP000362">
    <property type="protein sequence ID" value="ABG31672.1"/>
    <property type="molecule type" value="Genomic_DNA"/>
</dbReference>
<dbReference type="RefSeq" id="WP_011568289.1">
    <property type="nucleotide sequence ID" value="NC_008209.1"/>
</dbReference>
<dbReference type="SMR" id="Q168C1"/>
<dbReference type="STRING" id="375451.RD1_2070"/>
<dbReference type="KEGG" id="rde:RD1_2070"/>
<dbReference type="eggNOG" id="COG0101">
    <property type="taxonomic scope" value="Bacteria"/>
</dbReference>
<dbReference type="HOGENOM" id="CLU_014673_0_2_5"/>
<dbReference type="OrthoDB" id="9811823at2"/>
<dbReference type="Proteomes" id="UP000007029">
    <property type="component" value="Chromosome"/>
</dbReference>
<dbReference type="GO" id="GO:0003723">
    <property type="term" value="F:RNA binding"/>
    <property type="evidence" value="ECO:0007669"/>
    <property type="project" value="InterPro"/>
</dbReference>
<dbReference type="GO" id="GO:0160147">
    <property type="term" value="F:tRNA pseudouridine(38-40) synthase activity"/>
    <property type="evidence" value="ECO:0007669"/>
    <property type="project" value="UniProtKB-EC"/>
</dbReference>
<dbReference type="GO" id="GO:0031119">
    <property type="term" value="P:tRNA pseudouridine synthesis"/>
    <property type="evidence" value="ECO:0007669"/>
    <property type="project" value="UniProtKB-UniRule"/>
</dbReference>
<dbReference type="CDD" id="cd02570">
    <property type="entry name" value="PseudoU_synth_EcTruA"/>
    <property type="match status" value="1"/>
</dbReference>
<dbReference type="FunFam" id="3.30.70.580:FF:000001">
    <property type="entry name" value="tRNA pseudouridine synthase A"/>
    <property type="match status" value="1"/>
</dbReference>
<dbReference type="Gene3D" id="3.30.70.660">
    <property type="entry name" value="Pseudouridine synthase I, catalytic domain, C-terminal subdomain"/>
    <property type="match status" value="1"/>
</dbReference>
<dbReference type="Gene3D" id="3.30.70.580">
    <property type="entry name" value="Pseudouridine synthase I, catalytic domain, N-terminal subdomain"/>
    <property type="match status" value="1"/>
</dbReference>
<dbReference type="HAMAP" id="MF_00171">
    <property type="entry name" value="TruA"/>
    <property type="match status" value="1"/>
</dbReference>
<dbReference type="InterPro" id="IPR020103">
    <property type="entry name" value="PsdUridine_synth_cat_dom_sf"/>
</dbReference>
<dbReference type="InterPro" id="IPR001406">
    <property type="entry name" value="PsdUridine_synth_TruA"/>
</dbReference>
<dbReference type="InterPro" id="IPR020097">
    <property type="entry name" value="PsdUridine_synth_TruA_a/b_dom"/>
</dbReference>
<dbReference type="InterPro" id="IPR020095">
    <property type="entry name" value="PsdUridine_synth_TruA_C"/>
</dbReference>
<dbReference type="InterPro" id="IPR020094">
    <property type="entry name" value="TruA/RsuA/RluB/E/F_N"/>
</dbReference>
<dbReference type="NCBIfam" id="TIGR00071">
    <property type="entry name" value="hisT_truA"/>
    <property type="match status" value="1"/>
</dbReference>
<dbReference type="PANTHER" id="PTHR11142">
    <property type="entry name" value="PSEUDOURIDYLATE SYNTHASE"/>
    <property type="match status" value="1"/>
</dbReference>
<dbReference type="PANTHER" id="PTHR11142:SF0">
    <property type="entry name" value="TRNA PSEUDOURIDINE SYNTHASE-LIKE 1"/>
    <property type="match status" value="1"/>
</dbReference>
<dbReference type="Pfam" id="PF01416">
    <property type="entry name" value="PseudoU_synth_1"/>
    <property type="match status" value="2"/>
</dbReference>
<dbReference type="PIRSF" id="PIRSF001430">
    <property type="entry name" value="tRNA_psdUrid_synth"/>
    <property type="match status" value="1"/>
</dbReference>
<dbReference type="SUPFAM" id="SSF55120">
    <property type="entry name" value="Pseudouridine synthase"/>
    <property type="match status" value="1"/>
</dbReference>
<organism>
    <name type="scientific">Roseobacter denitrificans (strain ATCC 33942 / OCh 114)</name>
    <name type="common">Erythrobacter sp. (strain OCh 114)</name>
    <name type="synonym">Roseobacter denitrificans</name>
    <dbReference type="NCBI Taxonomy" id="375451"/>
    <lineage>
        <taxon>Bacteria</taxon>
        <taxon>Pseudomonadati</taxon>
        <taxon>Pseudomonadota</taxon>
        <taxon>Alphaproteobacteria</taxon>
        <taxon>Rhodobacterales</taxon>
        <taxon>Roseobacteraceae</taxon>
        <taxon>Roseobacter</taxon>
    </lineage>
</organism>